<feature type="signal peptide" evidence="3">
    <location>
        <begin position="1"/>
        <end position="31"/>
    </location>
</feature>
<feature type="chain" id="PRO_0000334146" description="Leucine-rich repeat and fibronectin type III domain-containing protein 1">
    <location>
        <begin position="32"/>
        <end position="766"/>
    </location>
</feature>
<feature type="topological domain" description="Extracellular" evidence="3">
    <location>
        <begin position="32"/>
        <end position="536"/>
    </location>
</feature>
<feature type="transmembrane region" description="Helical" evidence="3">
    <location>
        <begin position="537"/>
        <end position="557"/>
    </location>
</feature>
<feature type="topological domain" description="Cytoplasmic" evidence="3">
    <location>
        <begin position="558"/>
        <end position="766"/>
    </location>
</feature>
<feature type="domain" description="LRRNT">
    <location>
        <begin position="32"/>
        <end position="65"/>
    </location>
</feature>
<feature type="repeat" description="LRR 1">
    <location>
        <begin position="66"/>
        <end position="87"/>
    </location>
</feature>
<feature type="repeat" description="LRR 2">
    <location>
        <begin position="90"/>
        <end position="111"/>
    </location>
</feature>
<feature type="repeat" description="LRR 3">
    <location>
        <begin position="114"/>
        <end position="135"/>
    </location>
</feature>
<feature type="repeat" description="LRR 4">
    <location>
        <begin position="138"/>
        <end position="159"/>
    </location>
</feature>
<feature type="repeat" description="LRR 5">
    <location>
        <begin position="163"/>
        <end position="184"/>
    </location>
</feature>
<feature type="repeat" description="LRR 6">
    <location>
        <begin position="187"/>
        <end position="208"/>
    </location>
</feature>
<feature type="repeat" description="LRR 7">
    <location>
        <begin position="211"/>
        <end position="232"/>
    </location>
</feature>
<feature type="domain" description="LRRCT">
    <location>
        <begin position="252"/>
        <end position="298"/>
    </location>
</feature>
<feature type="domain" description="Ig-like">
    <location>
        <begin position="299"/>
        <end position="386"/>
    </location>
</feature>
<feature type="domain" description="Fibronectin type-III" evidence="5">
    <location>
        <begin position="424"/>
        <end position="520"/>
    </location>
</feature>
<feature type="region of interest" description="Disordered" evidence="6">
    <location>
        <begin position="397"/>
        <end position="424"/>
    </location>
</feature>
<feature type="region of interest" description="Disordered" evidence="6">
    <location>
        <begin position="568"/>
        <end position="601"/>
    </location>
</feature>
<feature type="region of interest" description="Disordered" evidence="6">
    <location>
        <begin position="645"/>
        <end position="742"/>
    </location>
</feature>
<feature type="short sequence motif" description="PDZ-binding">
    <location>
        <begin position="763"/>
        <end position="766"/>
    </location>
</feature>
<feature type="compositionally biased region" description="Basic residues" evidence="6">
    <location>
        <begin position="714"/>
        <end position="727"/>
    </location>
</feature>
<feature type="modified residue" description="Phosphoserine" evidence="2">
    <location>
        <position position="713"/>
    </location>
</feature>
<feature type="glycosylation site" description="N-linked (GlcNAc...) asparagine" evidence="3">
    <location>
        <position position="87"/>
    </location>
</feature>
<feature type="glycosylation site" description="N-linked (GlcNAc...) asparagine" evidence="3">
    <location>
        <position position="343"/>
    </location>
</feature>
<feature type="disulfide bond" evidence="4">
    <location>
        <begin position="321"/>
        <end position="370"/>
    </location>
</feature>
<feature type="splice variant" id="VSP_033618" description="In isoform 2." evidence="10">
    <original>RMIPSTSQTFLVNDLAAGRAYDLC</original>
    <variation>SSSCPGTHYVDQDGLEIRVPLASA</variation>
    <location>
        <begin position="469"/>
        <end position="492"/>
    </location>
</feature>
<feature type="splice variant" id="VSP_033617" description="In isoform 3." evidence="11">
    <location>
        <begin position="470"/>
        <end position="766"/>
    </location>
</feature>
<feature type="splice variant" id="VSP_033619" description="In isoform 2." evidence="10">
    <location>
        <begin position="493"/>
        <end position="766"/>
    </location>
</feature>
<feature type="mutagenesis site" description="Decreased promotion of neurite outgrowth. No effect on homomeric interactions." evidence="8 9">
    <location>
        <begin position="760"/>
        <end position="766"/>
    </location>
</feature>
<feature type="sequence conflict" description="In Ref. 5; AAH04018." evidence="12" ref="5">
    <original>G</original>
    <variation>R</variation>
    <location>
        <position position="9"/>
    </location>
</feature>
<feature type="sequence conflict" description="In Ref. 5; AAH04018." evidence="12" ref="5">
    <original>G</original>
    <variation>S</variation>
    <location>
        <position position="31"/>
    </location>
</feature>
<feature type="sequence conflict" description="In Ref. 2; AAZ20639." evidence="12" ref="2">
    <original>N</original>
    <variation>D</variation>
    <location>
        <position position="87"/>
    </location>
</feature>
<feature type="sequence conflict" description="In Ref. 4; BAC41123." evidence="12" ref="4">
    <original>S</original>
    <variation>F</variation>
    <location>
        <position position="408"/>
    </location>
</feature>
<feature type="sequence conflict" description="In Ref. 5; AAH04018." evidence="12" ref="5">
    <original>TS</original>
    <variation>AT</variation>
    <location>
        <begin position="423"/>
        <end position="424"/>
    </location>
</feature>
<feature type="strand" evidence="13">
    <location>
        <begin position="39"/>
        <end position="41"/>
    </location>
</feature>
<feature type="strand" evidence="13">
    <location>
        <begin position="48"/>
        <end position="50"/>
    </location>
</feature>
<feature type="strand" evidence="13">
    <location>
        <begin position="68"/>
        <end position="71"/>
    </location>
</feature>
<feature type="turn" evidence="13">
    <location>
        <begin position="82"/>
        <end position="85"/>
    </location>
</feature>
<feature type="strand" evidence="13">
    <location>
        <begin position="93"/>
        <end position="95"/>
    </location>
</feature>
<feature type="turn" evidence="13">
    <location>
        <begin position="106"/>
        <end position="111"/>
    </location>
</feature>
<feature type="strand" evidence="13">
    <location>
        <begin position="117"/>
        <end position="119"/>
    </location>
</feature>
<feature type="turn" evidence="13">
    <location>
        <begin position="130"/>
        <end position="132"/>
    </location>
</feature>
<feature type="strand" evidence="13">
    <location>
        <begin position="141"/>
        <end position="143"/>
    </location>
</feature>
<feature type="helix" evidence="13">
    <location>
        <begin position="158"/>
        <end position="160"/>
    </location>
</feature>
<feature type="turn" evidence="13">
    <location>
        <begin position="161"/>
        <end position="163"/>
    </location>
</feature>
<feature type="strand" evidence="13">
    <location>
        <begin position="166"/>
        <end position="168"/>
    </location>
</feature>
<feature type="helix" evidence="13">
    <location>
        <begin position="179"/>
        <end position="182"/>
    </location>
</feature>
<feature type="strand" evidence="13">
    <location>
        <begin position="190"/>
        <end position="192"/>
    </location>
</feature>
<feature type="strand" evidence="13">
    <location>
        <begin position="214"/>
        <end position="216"/>
    </location>
</feature>
<feature type="strand" evidence="13">
    <location>
        <begin position="246"/>
        <end position="248"/>
    </location>
</feature>
<feature type="helix" evidence="13">
    <location>
        <begin position="258"/>
        <end position="260"/>
    </location>
</feature>
<feature type="helix" evidence="13">
    <location>
        <begin position="261"/>
        <end position="264"/>
    </location>
</feature>
<feature type="strand" evidence="13">
    <location>
        <begin position="274"/>
        <end position="278"/>
    </location>
</feature>
<feature type="helix" evidence="13">
    <location>
        <begin position="279"/>
        <end position="281"/>
    </location>
</feature>
<feature type="helix" evidence="13">
    <location>
        <begin position="286"/>
        <end position="288"/>
    </location>
</feature>
<feature type="helix" evidence="13">
    <location>
        <begin position="291"/>
        <end position="293"/>
    </location>
</feature>
<feature type="strand" evidence="13">
    <location>
        <begin position="297"/>
        <end position="303"/>
    </location>
</feature>
<feature type="strand" evidence="13">
    <location>
        <begin position="313"/>
        <end position="315"/>
    </location>
</feature>
<feature type="strand" evidence="13">
    <location>
        <begin position="317"/>
        <end position="319"/>
    </location>
</feature>
<feature type="strand" evidence="13">
    <location>
        <begin position="322"/>
        <end position="327"/>
    </location>
</feature>
<feature type="strand" evidence="13">
    <location>
        <begin position="330"/>
        <end position="334"/>
    </location>
</feature>
<feature type="strand" evidence="13">
    <location>
        <begin position="347"/>
        <end position="349"/>
    </location>
</feature>
<feature type="strand" evidence="13">
    <location>
        <begin position="355"/>
        <end position="357"/>
    </location>
</feature>
<feature type="strand" evidence="13">
    <location>
        <begin position="367"/>
        <end position="374"/>
    </location>
</feature>
<feature type="strand" evidence="13">
    <location>
        <begin position="377"/>
        <end position="384"/>
    </location>
</feature>
<reference key="1">
    <citation type="journal article" date="2006" name="Gene">
        <title>Comparative analysis of structure, expression and PSD95-binding capacity of Lrfn, a novel family of neuronal transmembrane proteins.</title>
        <authorList>
            <person name="Morimura N."/>
            <person name="Inoue T."/>
            <person name="Katayama K."/>
            <person name="Aruga J."/>
        </authorList>
    </citation>
    <scope>NUCLEOTIDE SEQUENCE [MRNA] (ISOFORM 1)</scope>
    <scope>FUNCTION</scope>
    <scope>INTERACTION WITH DLG4</scope>
    <scope>DEVELOPMENTAL STAGE</scope>
    <scope>TISSUE SPECIFICITY</scope>
    <scope>GLYCOSYLATION</scope>
    <scope>SUBCELLULAR LOCATION</scope>
    <scope>TOPOLOGY</scope>
    <source>
        <strain>Swiss Webster</strain>
    </source>
</reference>
<reference key="2">
    <citation type="journal article" date="2006" name="J. Neurosci.">
        <title>A novel family of adhesion-like molecules that interacts with the NMDA receptor.</title>
        <authorList>
            <person name="Wang C.Y."/>
            <person name="Chang K."/>
            <person name="Petralia R.S."/>
            <person name="Wang Y.X."/>
            <person name="Seabold G.K."/>
            <person name="Wenthold R.J."/>
        </authorList>
    </citation>
    <scope>NUCLEOTIDE SEQUENCE [MRNA] (ISOFORM 1)</scope>
    <source>
        <strain>BALB/cJ</strain>
    </source>
</reference>
<reference key="3">
    <citation type="journal article" date="2006" name="Neuron">
        <title>SALM synaptic cell adhesion-like molecules regulate the differentiation of excitatory synapses.</title>
        <authorList>
            <person name="Ko J."/>
            <person name="Kim S."/>
            <person name="Chung H.S."/>
            <person name="Kim K."/>
            <person name="Han K."/>
            <person name="Kim H."/>
            <person name="Jun H."/>
            <person name="Kaang B.-K."/>
            <person name="Kim E."/>
        </authorList>
    </citation>
    <scope>NUCLEOTIDE SEQUENCE [MRNA] (ISOFORM 1)</scope>
    <source>
        <strain>C57BL/6J</strain>
        <tissue>Brain</tissue>
    </source>
</reference>
<reference key="4">
    <citation type="journal article" date="2005" name="Science">
        <title>The transcriptional landscape of the mammalian genome.</title>
        <authorList>
            <person name="Carninci P."/>
            <person name="Kasukawa T."/>
            <person name="Katayama S."/>
            <person name="Gough J."/>
            <person name="Frith M.C."/>
            <person name="Maeda N."/>
            <person name="Oyama R."/>
            <person name="Ravasi T."/>
            <person name="Lenhard B."/>
            <person name="Wells C."/>
            <person name="Kodzius R."/>
            <person name="Shimokawa K."/>
            <person name="Bajic V.B."/>
            <person name="Brenner S.E."/>
            <person name="Batalov S."/>
            <person name="Forrest A.R."/>
            <person name="Zavolan M."/>
            <person name="Davis M.J."/>
            <person name="Wilming L.G."/>
            <person name="Aidinis V."/>
            <person name="Allen J.E."/>
            <person name="Ambesi-Impiombato A."/>
            <person name="Apweiler R."/>
            <person name="Aturaliya R.N."/>
            <person name="Bailey T.L."/>
            <person name="Bansal M."/>
            <person name="Baxter L."/>
            <person name="Beisel K.W."/>
            <person name="Bersano T."/>
            <person name="Bono H."/>
            <person name="Chalk A.M."/>
            <person name="Chiu K.P."/>
            <person name="Choudhary V."/>
            <person name="Christoffels A."/>
            <person name="Clutterbuck D.R."/>
            <person name="Crowe M.L."/>
            <person name="Dalla E."/>
            <person name="Dalrymple B.P."/>
            <person name="de Bono B."/>
            <person name="Della Gatta G."/>
            <person name="di Bernardo D."/>
            <person name="Down T."/>
            <person name="Engstrom P."/>
            <person name="Fagiolini M."/>
            <person name="Faulkner G."/>
            <person name="Fletcher C.F."/>
            <person name="Fukushima T."/>
            <person name="Furuno M."/>
            <person name="Futaki S."/>
            <person name="Gariboldi M."/>
            <person name="Georgii-Hemming P."/>
            <person name="Gingeras T.R."/>
            <person name="Gojobori T."/>
            <person name="Green R.E."/>
            <person name="Gustincich S."/>
            <person name="Harbers M."/>
            <person name="Hayashi Y."/>
            <person name="Hensch T.K."/>
            <person name="Hirokawa N."/>
            <person name="Hill D."/>
            <person name="Huminiecki L."/>
            <person name="Iacono M."/>
            <person name="Ikeo K."/>
            <person name="Iwama A."/>
            <person name="Ishikawa T."/>
            <person name="Jakt M."/>
            <person name="Kanapin A."/>
            <person name="Katoh M."/>
            <person name="Kawasawa Y."/>
            <person name="Kelso J."/>
            <person name="Kitamura H."/>
            <person name="Kitano H."/>
            <person name="Kollias G."/>
            <person name="Krishnan S.P."/>
            <person name="Kruger A."/>
            <person name="Kummerfeld S.K."/>
            <person name="Kurochkin I.V."/>
            <person name="Lareau L.F."/>
            <person name="Lazarevic D."/>
            <person name="Lipovich L."/>
            <person name="Liu J."/>
            <person name="Liuni S."/>
            <person name="McWilliam S."/>
            <person name="Madan Babu M."/>
            <person name="Madera M."/>
            <person name="Marchionni L."/>
            <person name="Matsuda H."/>
            <person name="Matsuzawa S."/>
            <person name="Miki H."/>
            <person name="Mignone F."/>
            <person name="Miyake S."/>
            <person name="Morris K."/>
            <person name="Mottagui-Tabar S."/>
            <person name="Mulder N."/>
            <person name="Nakano N."/>
            <person name="Nakauchi H."/>
            <person name="Ng P."/>
            <person name="Nilsson R."/>
            <person name="Nishiguchi S."/>
            <person name="Nishikawa S."/>
            <person name="Nori F."/>
            <person name="Ohara O."/>
            <person name="Okazaki Y."/>
            <person name="Orlando V."/>
            <person name="Pang K.C."/>
            <person name="Pavan W.J."/>
            <person name="Pavesi G."/>
            <person name="Pesole G."/>
            <person name="Petrovsky N."/>
            <person name="Piazza S."/>
            <person name="Reed J."/>
            <person name="Reid J.F."/>
            <person name="Ring B.Z."/>
            <person name="Ringwald M."/>
            <person name="Rost B."/>
            <person name="Ruan Y."/>
            <person name="Salzberg S.L."/>
            <person name="Sandelin A."/>
            <person name="Schneider C."/>
            <person name="Schoenbach C."/>
            <person name="Sekiguchi K."/>
            <person name="Semple C.A."/>
            <person name="Seno S."/>
            <person name="Sessa L."/>
            <person name="Sheng Y."/>
            <person name="Shibata Y."/>
            <person name="Shimada H."/>
            <person name="Shimada K."/>
            <person name="Silva D."/>
            <person name="Sinclair B."/>
            <person name="Sperling S."/>
            <person name="Stupka E."/>
            <person name="Sugiura K."/>
            <person name="Sultana R."/>
            <person name="Takenaka Y."/>
            <person name="Taki K."/>
            <person name="Tammoja K."/>
            <person name="Tan S.L."/>
            <person name="Tang S."/>
            <person name="Taylor M.S."/>
            <person name="Tegner J."/>
            <person name="Teichmann S.A."/>
            <person name="Ueda H.R."/>
            <person name="van Nimwegen E."/>
            <person name="Verardo R."/>
            <person name="Wei C.L."/>
            <person name="Yagi K."/>
            <person name="Yamanishi H."/>
            <person name="Zabarovsky E."/>
            <person name="Zhu S."/>
            <person name="Zimmer A."/>
            <person name="Hide W."/>
            <person name="Bult C."/>
            <person name="Grimmond S.M."/>
            <person name="Teasdale R.D."/>
            <person name="Liu E.T."/>
            <person name="Brusic V."/>
            <person name="Quackenbush J."/>
            <person name="Wahlestedt C."/>
            <person name="Mattick J.S."/>
            <person name="Hume D.A."/>
            <person name="Kai C."/>
            <person name="Sasaki D."/>
            <person name="Tomaru Y."/>
            <person name="Fukuda S."/>
            <person name="Kanamori-Katayama M."/>
            <person name="Suzuki M."/>
            <person name="Aoki J."/>
            <person name="Arakawa T."/>
            <person name="Iida J."/>
            <person name="Imamura K."/>
            <person name="Itoh M."/>
            <person name="Kato T."/>
            <person name="Kawaji H."/>
            <person name="Kawagashira N."/>
            <person name="Kawashima T."/>
            <person name="Kojima M."/>
            <person name="Kondo S."/>
            <person name="Konno H."/>
            <person name="Nakano K."/>
            <person name="Ninomiya N."/>
            <person name="Nishio T."/>
            <person name="Okada M."/>
            <person name="Plessy C."/>
            <person name="Shibata K."/>
            <person name="Shiraki T."/>
            <person name="Suzuki S."/>
            <person name="Tagami M."/>
            <person name="Waki K."/>
            <person name="Watahiki A."/>
            <person name="Okamura-Oho Y."/>
            <person name="Suzuki H."/>
            <person name="Kawai J."/>
            <person name="Hayashizaki Y."/>
        </authorList>
    </citation>
    <scope>NUCLEOTIDE SEQUENCE [LARGE SCALE MRNA] (ISOFORM 3)</scope>
    <source>
        <strain>C57BL/6J</strain>
        <tissue>Cerebellum</tissue>
    </source>
</reference>
<reference key="5">
    <citation type="journal article" date="2004" name="Genome Res.">
        <title>The status, quality, and expansion of the NIH full-length cDNA project: the Mammalian Gene Collection (MGC).</title>
        <authorList>
            <consortium name="The MGC Project Team"/>
        </authorList>
    </citation>
    <scope>NUCLEOTIDE SEQUENCE [LARGE SCALE MRNA] (ISOFORM 2)</scope>
    <source>
        <strain>Czech II</strain>
        <tissue>Mammary tumor</tissue>
    </source>
</reference>
<reference key="6">
    <citation type="journal article" date="2008" name="J. Biol. Chem.">
        <title>The SALM family of adhesion-like molecules forms heteromeric and homomeric complexes.</title>
        <authorList>
            <person name="Seabold G.K."/>
            <person name="Wang P.Y."/>
            <person name="Chang K."/>
            <person name="Wang C.Y."/>
            <person name="Wang Y.X."/>
            <person name="Petralia R.S."/>
            <person name="Wenthold R.J."/>
        </authorList>
    </citation>
    <scope>INTERACTION WITH LRFN1; LRFN2; LRFN3; LRFN4 AND LRFN5</scope>
    <scope>MUTAGENESIS OF 760-GLU--VAL-766</scope>
</reference>
<reference key="7">
    <citation type="journal article" date="2008" name="Mol. Cell. Neurosci.">
        <title>Synaptic adhesion-like molecules (SALMs) promote neurite outgrowth.</title>
        <authorList>
            <person name="Wang P.Y."/>
            <person name="Seabold G.K."/>
            <person name="Wenthold R.J."/>
        </authorList>
    </citation>
    <scope>FUNCTION</scope>
    <scope>MUTAGENESIS OF 760-GLU--VAL-766</scope>
</reference>
<reference key="8">
    <citation type="journal article" date="2010" name="Cell">
        <title>A tissue-specific atlas of mouse protein phosphorylation and expression.</title>
        <authorList>
            <person name="Huttlin E.L."/>
            <person name="Jedrychowski M.P."/>
            <person name="Elias J.E."/>
            <person name="Goswami T."/>
            <person name="Rad R."/>
            <person name="Beausoleil S.A."/>
            <person name="Villen J."/>
            <person name="Haas W."/>
            <person name="Sowa M.E."/>
            <person name="Gygi S.P."/>
        </authorList>
    </citation>
    <scope>IDENTIFICATION BY MASS SPECTROMETRY [LARGE SCALE ANALYSIS]</scope>
    <source>
        <tissue>Brain</tissue>
    </source>
</reference>
<keyword id="KW-0002">3D-structure</keyword>
<keyword id="KW-0025">Alternative splicing</keyword>
<keyword id="KW-1003">Cell membrane</keyword>
<keyword id="KW-1015">Disulfide bond</keyword>
<keyword id="KW-0325">Glycoprotein</keyword>
<keyword id="KW-0393">Immunoglobulin domain</keyword>
<keyword id="KW-0433">Leucine-rich repeat</keyword>
<keyword id="KW-0472">Membrane</keyword>
<keyword id="KW-0597">Phosphoprotein</keyword>
<keyword id="KW-0628">Postsynaptic cell membrane</keyword>
<keyword id="KW-1185">Reference proteome</keyword>
<keyword id="KW-0677">Repeat</keyword>
<keyword id="KW-0732">Signal</keyword>
<keyword id="KW-0770">Synapse</keyword>
<keyword id="KW-0812">Transmembrane</keyword>
<keyword id="KW-1133">Transmembrane helix</keyword>
<sequence>MAPGPFSSGLFSPPPAALPFLLLLWAGASRGQPCPGRCICQNVAPTLTMLCAKTGLLFVPPAIDRRVVELRLTDNFIAAVRRRDFANMTSLVHLTLSRNTIGQVAAGAFADLRALRALHLDSNRLAEVRGDQLRGLGNLRHLILGNNQIRKVESAAFDAFLSTVEDLDLSYNNLEALPWEAVGQMVNLNTLTLDHNLIDHIAEGTFVQLHKLVRLDMTSNRLHKLPPDGLFLRSQGGGPKPPTPLTVSFGGNPLHCNCELLWLRRLTREDDLETCATPEHLTDRYFWSIPEEEFLCEPPLITRQAGGRALVVEGQAVSLRCRAVGDPEPVVHWVAPDGRLLGNSSRTRVRGDGTLDVTITTLRDSGTFTCIASNAAGEATAPVEVCVVPLPLMAPPPAAPPPLTEPGSSDIATPGRPGANDSTSERRLVAAELTSSSVLIRWPAQRPVPGIRMYQVQYNSSADDSLVYRMIPSTSQTFLVNDLAAGRAYDLCVLAVYDDGATALPATRVVGCVQFTTAGDPAPCRPLRAHFLGGTMIIAIGGVIVASVLVFIVLLMIRYKVYGDGDSRRIKGTSRTPPRVSHVCSQTNGAGAQQASAPPAPDRYEALREVAVPAAIEAKAMEAEATSTELEVVLGRSLGGSATSLCLLPSEETSGEESRAMTGPRRSRSGALGPPTSAPPTLALVPGGAPARPRPQQRYSFDGDYGALFQSHSYPRRARRTKRHRSTPHLDGAGGGAAGEDGDLGLGSARARLAFTSTEWMLESTV</sequence>
<organism>
    <name type="scientific">Mus musculus</name>
    <name type="common">Mouse</name>
    <dbReference type="NCBI Taxonomy" id="10090"/>
    <lineage>
        <taxon>Eukaryota</taxon>
        <taxon>Metazoa</taxon>
        <taxon>Chordata</taxon>
        <taxon>Craniata</taxon>
        <taxon>Vertebrata</taxon>
        <taxon>Euteleostomi</taxon>
        <taxon>Mammalia</taxon>
        <taxon>Eutheria</taxon>
        <taxon>Euarchontoglires</taxon>
        <taxon>Glires</taxon>
        <taxon>Rodentia</taxon>
        <taxon>Myomorpha</taxon>
        <taxon>Muroidea</taxon>
        <taxon>Muridae</taxon>
        <taxon>Murinae</taxon>
        <taxon>Mus</taxon>
        <taxon>Mus</taxon>
    </lineage>
</organism>
<protein>
    <recommendedName>
        <fullName>Leucine-rich repeat and fibronectin type III domain-containing protein 1</fullName>
    </recommendedName>
    <alternativeName>
        <fullName>Synaptic adhesion-like molecule 2</fullName>
    </alternativeName>
    <alternativeName>
        <fullName>Synaptic differentiation-enhancing molecule 1</fullName>
    </alternativeName>
</protein>
<gene>
    <name type="primary">Lrfn1</name>
    <name type="synonym">Salm2</name>
    <name type="synonym">Semo1</name>
</gene>
<proteinExistence type="evidence at protein level"/>
<name>LRFN1_MOUSE</name>
<comment type="function">
    <text evidence="7 9">Promotes neurite outgrowth in hippocampal neurons. Involved in the regulation and maintenance of excitatory synapses. Induces the clustering of excitatory postsynaptic proteins, including DLG4, DLGAP1, GRIA1 and GRIN1.</text>
</comment>
<comment type="subunit">
    <text evidence="1 7 8">Can form heteromeric complexes with LRFN2, LRFN3, LRFN4 and LRFN5. Forms homomeric complexes, but not across cell junctions. Interacts with DLG4. Also interacts with DLG1, DLG2, and DLG3 (By similarity). Interacts with 2 AMPA receptor subunits GRIA1 and GRIA2 and NMDA receptor subunit GRIN1.</text>
</comment>
<comment type="subcellular location">
    <subcellularLocation>
        <location evidence="1">Membrane</location>
        <topology evidence="1">Single-pass type I membrane protein</topology>
    </subcellularLocation>
    <subcellularLocation>
        <location evidence="1">Synapse</location>
    </subcellularLocation>
    <subcellularLocation>
        <location evidence="1">Postsynaptic density membrane</location>
    </subcellularLocation>
    <text evidence="1">Detected in excitatory, but not inhibitory, synaptic plasma membrane.</text>
</comment>
<comment type="alternative products">
    <event type="alternative splicing"/>
    <isoform>
        <id>Q2WF71-1</id>
        <name>1</name>
        <sequence type="displayed"/>
    </isoform>
    <isoform>
        <id>Q2WF71-2</id>
        <name>2</name>
        <sequence type="described" ref="VSP_033618 VSP_033619"/>
    </isoform>
    <isoform>
        <id>Q2WF71-3</id>
        <name>3</name>
        <sequence type="described" ref="VSP_033617"/>
    </isoform>
</comment>
<comment type="tissue specificity">
    <text evidence="7">Predominantly expressed in the brain, with a weak, but broad expression in the cerebral cortex and diencephalic nuclei. Also detected in other parts of the central nervous system, including the olfactory bulb, pons, cerebellum, and medulla oblongata, as well as in the peripheral nervous system, such as the ganglia of cranial nerves and the dorsal root ganglion during gestation.</text>
</comment>
<comment type="developmental stage">
    <text evidence="7">Expression starts around 10.5 dpc. At 11.5 dpc, broadly expressed in the telencephalic and diencephalic vesicles. This pattern of expression continues until 17.5 dpc.</text>
</comment>
<comment type="domain">
    <text evidence="1">The PDZ-binding motif is required for neurite outgrowth promotion. This motif is also involved in DLG1-, DLG3- and DLG4-binding (By similarity).</text>
</comment>
<comment type="PTM">
    <text evidence="7">Glycosylated.</text>
</comment>
<comment type="similarity">
    <text evidence="12">Belongs to the LRFN family.</text>
</comment>
<comment type="sequence caution" evidence="12">
    <conflict type="frameshift">
        <sequence resource="EMBL-CDS" id="BAC41123"/>
    </conflict>
</comment>
<accession>Q2WF71</accession>
<accession>Q460M4</accession>
<accession>Q8C1V9</accession>
<accession>Q99KT6</accession>
<dbReference type="EMBL" id="AB243740">
    <property type="protein sequence ID" value="BAE53711.1"/>
    <property type="molecule type" value="mRNA"/>
</dbReference>
<dbReference type="EMBL" id="DQ070870">
    <property type="protein sequence ID" value="AAZ20639.1"/>
    <property type="molecule type" value="mRNA"/>
</dbReference>
<dbReference type="EMBL" id="DQ314497">
    <property type="protein sequence ID" value="ABC40967.1"/>
    <property type="molecule type" value="mRNA"/>
</dbReference>
<dbReference type="EMBL" id="AK090175">
    <property type="protein sequence ID" value="BAC41123.1"/>
    <property type="status" value="ALT_FRAME"/>
    <property type="molecule type" value="mRNA"/>
</dbReference>
<dbReference type="EMBL" id="BC004018">
    <property type="protein sequence ID" value="AAH04018.1"/>
    <property type="molecule type" value="mRNA"/>
</dbReference>
<dbReference type="CCDS" id="CCDS21045.1">
    <molecule id="Q2WF71-2"/>
</dbReference>
<dbReference type="CCDS" id="CCDS52163.1">
    <molecule id="Q2WF71-1"/>
</dbReference>
<dbReference type="RefSeq" id="NP_001135393.1">
    <molecule id="Q2WF71-1"/>
    <property type="nucleotide sequence ID" value="NM_001141921.2"/>
</dbReference>
<dbReference type="RefSeq" id="NP_001407131.1">
    <molecule id="Q2WF71-1"/>
    <property type="nucleotide sequence ID" value="NM_001420202.1"/>
</dbReference>
<dbReference type="RefSeq" id="NP_001407132.1">
    <molecule id="Q2WF71-1"/>
    <property type="nucleotide sequence ID" value="NM_001420203.1"/>
</dbReference>
<dbReference type="RefSeq" id="NP_001407133.1">
    <molecule id="Q2WF71-1"/>
    <property type="nucleotide sequence ID" value="NM_001420204.1"/>
</dbReference>
<dbReference type="RefSeq" id="NP_001407134.1">
    <molecule id="Q2WF71-2"/>
    <property type="nucleotide sequence ID" value="NM_001420205.1"/>
</dbReference>
<dbReference type="RefSeq" id="NP_085039.2">
    <molecule id="Q2WF71-2"/>
    <property type="nucleotide sequence ID" value="NM_030562.3"/>
</dbReference>
<dbReference type="RefSeq" id="XP_006540501.1">
    <property type="nucleotide sequence ID" value="XM_006540438.1"/>
</dbReference>
<dbReference type="RefSeq" id="XP_036009485.1">
    <molecule id="Q2WF71-1"/>
    <property type="nucleotide sequence ID" value="XM_036153592.1"/>
</dbReference>
<dbReference type="RefSeq" id="XP_036009487.1">
    <molecule id="Q2WF71-1"/>
    <property type="nucleotide sequence ID" value="XM_036153594.1"/>
</dbReference>
<dbReference type="PDB" id="5XWU">
    <property type="method" value="X-ray"/>
    <property type="resolution" value="3.16 A"/>
    <property type="chains" value="B/D=32-390"/>
</dbReference>
<dbReference type="PDBsum" id="5XWU"/>
<dbReference type="SMR" id="Q2WF71"/>
<dbReference type="BioGRID" id="219807">
    <property type="interactions" value="1"/>
</dbReference>
<dbReference type="FunCoup" id="Q2WF71">
    <property type="interactions" value="50"/>
</dbReference>
<dbReference type="IntAct" id="Q2WF71">
    <property type="interactions" value="2"/>
</dbReference>
<dbReference type="STRING" id="10090.ENSMUSP00000103923"/>
<dbReference type="GlyCosmos" id="Q2WF71">
    <property type="glycosylation" value="2 sites, No reported glycans"/>
</dbReference>
<dbReference type="GlyGen" id="Q2WF71">
    <property type="glycosylation" value="6 sites, 3 N-linked glycans (3 sites), 1 O-linked glycan (1 site)"/>
</dbReference>
<dbReference type="iPTMnet" id="Q2WF71"/>
<dbReference type="PhosphoSitePlus" id="Q2WF71"/>
<dbReference type="jPOST" id="Q2WF71"/>
<dbReference type="PaxDb" id="10090-ENSMUSP00000103923"/>
<dbReference type="PeptideAtlas" id="Q2WF71"/>
<dbReference type="ProteomicsDB" id="252519">
    <molecule id="Q2WF71-1"/>
</dbReference>
<dbReference type="ProteomicsDB" id="252520">
    <molecule id="Q2WF71-2"/>
</dbReference>
<dbReference type="ProteomicsDB" id="252521">
    <molecule id="Q2WF71-3"/>
</dbReference>
<dbReference type="Antibodypedia" id="30291">
    <property type="antibodies" value="71 antibodies from 25 providers"/>
</dbReference>
<dbReference type="Ensembl" id="ENSMUST00000055110.11">
    <molecule id="Q2WF71-2"/>
    <property type="protein sequence ID" value="ENSMUSP00000057645.10"/>
    <property type="gene ID" value="ENSMUSG00000030600.16"/>
</dbReference>
<dbReference type="Ensembl" id="ENSMUST00000108288.9">
    <molecule id="Q2WF71-1"/>
    <property type="protein sequence ID" value="ENSMUSP00000103923.4"/>
    <property type="gene ID" value="ENSMUSG00000030600.16"/>
</dbReference>
<dbReference type="Ensembl" id="ENSMUST00000189877.7">
    <molecule id="Q2WF71-2"/>
    <property type="protein sequence ID" value="ENSMUSP00000139609.2"/>
    <property type="gene ID" value="ENSMUSG00000030600.16"/>
</dbReference>
<dbReference type="GeneID" id="80749"/>
<dbReference type="KEGG" id="mmu:80749"/>
<dbReference type="UCSC" id="uc009fza.1">
    <molecule id="Q2WF71-1"/>
    <property type="organism name" value="mouse"/>
</dbReference>
<dbReference type="UCSC" id="uc009fzb.2">
    <molecule id="Q2WF71-2"/>
    <property type="organism name" value="mouse"/>
</dbReference>
<dbReference type="AGR" id="MGI:2136810"/>
<dbReference type="CTD" id="57622"/>
<dbReference type="MGI" id="MGI:2136810">
    <property type="gene designation" value="Lrfn1"/>
</dbReference>
<dbReference type="VEuPathDB" id="HostDB:ENSMUSG00000030600"/>
<dbReference type="eggNOG" id="KOG0619">
    <property type="taxonomic scope" value="Eukaryota"/>
</dbReference>
<dbReference type="GeneTree" id="ENSGT00940000160922"/>
<dbReference type="HOGENOM" id="CLU_016998_1_0_1"/>
<dbReference type="InParanoid" id="Q2WF71"/>
<dbReference type="OMA" id="GSTEWML"/>
<dbReference type="OrthoDB" id="1394818at2759"/>
<dbReference type="PhylomeDB" id="Q2WF71"/>
<dbReference type="TreeFam" id="TF350185"/>
<dbReference type="Reactome" id="R-MMU-8849932">
    <property type="pathway name" value="Synaptic adhesion-like molecules"/>
</dbReference>
<dbReference type="BioGRID-ORCS" id="80749">
    <property type="hits" value="2 hits in 79 CRISPR screens"/>
</dbReference>
<dbReference type="CD-CODE" id="CE726F99">
    <property type="entry name" value="Postsynaptic density"/>
</dbReference>
<dbReference type="ChiTaRS" id="Lrfn1">
    <property type="organism name" value="mouse"/>
</dbReference>
<dbReference type="PRO" id="PR:Q2WF71"/>
<dbReference type="Proteomes" id="UP000000589">
    <property type="component" value="Chromosome 7"/>
</dbReference>
<dbReference type="RNAct" id="Q2WF71">
    <property type="molecule type" value="protein"/>
</dbReference>
<dbReference type="Bgee" id="ENSMUSG00000030600">
    <property type="expression patterns" value="Expressed in embryonic brain and 123 other cell types or tissues"/>
</dbReference>
<dbReference type="ExpressionAtlas" id="Q2WF71">
    <property type="expression patterns" value="baseline and differential"/>
</dbReference>
<dbReference type="GO" id="GO:0009986">
    <property type="term" value="C:cell surface"/>
    <property type="evidence" value="ECO:0000314"/>
    <property type="project" value="MGI"/>
</dbReference>
<dbReference type="GO" id="GO:0098839">
    <property type="term" value="C:postsynaptic density membrane"/>
    <property type="evidence" value="ECO:0007669"/>
    <property type="project" value="UniProtKB-SubCell"/>
</dbReference>
<dbReference type="GO" id="GO:0099151">
    <property type="term" value="P:regulation of postsynaptic density assembly"/>
    <property type="evidence" value="ECO:0007669"/>
    <property type="project" value="Ensembl"/>
</dbReference>
<dbReference type="CDD" id="cd00063">
    <property type="entry name" value="FN3"/>
    <property type="match status" value="1"/>
</dbReference>
<dbReference type="FunFam" id="2.60.40.10:FF:000235">
    <property type="entry name" value="Leucine-rich repeat and fibronectin type III domain-containing 2"/>
    <property type="match status" value="1"/>
</dbReference>
<dbReference type="FunFam" id="2.60.40.10:FF:000091">
    <property type="entry name" value="Leucine-rich repeat and fibronectin type III domain-containing protein 1"/>
    <property type="match status" value="1"/>
</dbReference>
<dbReference type="FunFam" id="3.80.10.10:FF:000016">
    <property type="entry name" value="Leucine-rich repeat and fibronectin type III domain-containing protein 1"/>
    <property type="match status" value="1"/>
</dbReference>
<dbReference type="FunFam" id="3.80.10.10:FF:000019">
    <property type="entry name" value="leucine-rich repeat and fibronectin type III domain-containing protein 1"/>
    <property type="match status" value="1"/>
</dbReference>
<dbReference type="Gene3D" id="2.60.40.10">
    <property type="entry name" value="Immunoglobulins"/>
    <property type="match status" value="2"/>
</dbReference>
<dbReference type="Gene3D" id="3.80.10.10">
    <property type="entry name" value="Ribonuclease Inhibitor"/>
    <property type="match status" value="2"/>
</dbReference>
<dbReference type="InterPro" id="IPR000483">
    <property type="entry name" value="Cys-rich_flank_reg_C"/>
</dbReference>
<dbReference type="InterPro" id="IPR003961">
    <property type="entry name" value="FN3_dom"/>
</dbReference>
<dbReference type="InterPro" id="IPR036116">
    <property type="entry name" value="FN3_sf"/>
</dbReference>
<dbReference type="InterPro" id="IPR007110">
    <property type="entry name" value="Ig-like_dom"/>
</dbReference>
<dbReference type="InterPro" id="IPR036179">
    <property type="entry name" value="Ig-like_dom_sf"/>
</dbReference>
<dbReference type="InterPro" id="IPR013783">
    <property type="entry name" value="Ig-like_fold"/>
</dbReference>
<dbReference type="InterPro" id="IPR013098">
    <property type="entry name" value="Ig_I-set"/>
</dbReference>
<dbReference type="InterPro" id="IPR003599">
    <property type="entry name" value="Ig_sub"/>
</dbReference>
<dbReference type="InterPro" id="IPR003598">
    <property type="entry name" value="Ig_sub2"/>
</dbReference>
<dbReference type="InterPro" id="IPR001611">
    <property type="entry name" value="Leu-rich_rpt"/>
</dbReference>
<dbReference type="InterPro" id="IPR003591">
    <property type="entry name" value="Leu-rich_rpt_typical-subtyp"/>
</dbReference>
<dbReference type="InterPro" id="IPR050467">
    <property type="entry name" value="LRFN"/>
</dbReference>
<dbReference type="InterPro" id="IPR032675">
    <property type="entry name" value="LRR_dom_sf"/>
</dbReference>
<dbReference type="PANTHER" id="PTHR45842:SF7">
    <property type="entry name" value="LEUCINE-RICH REPEAT AND FIBRONECTIN TYPE III DOMAIN-CONTAINING PROTEIN 1"/>
    <property type="match status" value="1"/>
</dbReference>
<dbReference type="PANTHER" id="PTHR45842">
    <property type="entry name" value="SYNAPTIC ADHESION-LIKE MOLECULE SALM"/>
    <property type="match status" value="1"/>
</dbReference>
<dbReference type="Pfam" id="PF00041">
    <property type="entry name" value="fn3"/>
    <property type="match status" value="1"/>
</dbReference>
<dbReference type="Pfam" id="PF07679">
    <property type="entry name" value="I-set"/>
    <property type="match status" value="1"/>
</dbReference>
<dbReference type="Pfam" id="PF13855">
    <property type="entry name" value="LRR_8"/>
    <property type="match status" value="2"/>
</dbReference>
<dbReference type="SMART" id="SM00409">
    <property type="entry name" value="IG"/>
    <property type="match status" value="1"/>
</dbReference>
<dbReference type="SMART" id="SM00408">
    <property type="entry name" value="IGc2"/>
    <property type="match status" value="1"/>
</dbReference>
<dbReference type="SMART" id="SM00369">
    <property type="entry name" value="LRR_TYP"/>
    <property type="match status" value="6"/>
</dbReference>
<dbReference type="SMART" id="SM00082">
    <property type="entry name" value="LRRCT"/>
    <property type="match status" value="1"/>
</dbReference>
<dbReference type="SUPFAM" id="SSF49265">
    <property type="entry name" value="Fibronectin type III"/>
    <property type="match status" value="1"/>
</dbReference>
<dbReference type="SUPFAM" id="SSF48726">
    <property type="entry name" value="Immunoglobulin"/>
    <property type="match status" value="1"/>
</dbReference>
<dbReference type="SUPFAM" id="SSF52058">
    <property type="entry name" value="L domain-like"/>
    <property type="match status" value="1"/>
</dbReference>
<dbReference type="PROSITE" id="PS50853">
    <property type="entry name" value="FN3"/>
    <property type="match status" value="1"/>
</dbReference>
<dbReference type="PROSITE" id="PS50835">
    <property type="entry name" value="IG_LIKE"/>
    <property type="match status" value="1"/>
</dbReference>
<dbReference type="PROSITE" id="PS51450">
    <property type="entry name" value="LRR"/>
    <property type="match status" value="6"/>
</dbReference>
<evidence type="ECO:0000250" key="1"/>
<evidence type="ECO:0000250" key="2">
    <source>
        <dbReference type="UniProtKB" id="Q9P244"/>
    </source>
</evidence>
<evidence type="ECO:0000255" key="3"/>
<evidence type="ECO:0000255" key="4">
    <source>
        <dbReference type="PROSITE-ProRule" id="PRU00114"/>
    </source>
</evidence>
<evidence type="ECO:0000255" key="5">
    <source>
        <dbReference type="PROSITE-ProRule" id="PRU00316"/>
    </source>
</evidence>
<evidence type="ECO:0000256" key="6">
    <source>
        <dbReference type="SAM" id="MobiDB-lite"/>
    </source>
</evidence>
<evidence type="ECO:0000269" key="7">
    <source>
    </source>
</evidence>
<evidence type="ECO:0000269" key="8">
    <source>
    </source>
</evidence>
<evidence type="ECO:0000269" key="9">
    <source>
    </source>
</evidence>
<evidence type="ECO:0000303" key="10">
    <source>
    </source>
</evidence>
<evidence type="ECO:0000303" key="11">
    <source>
    </source>
</evidence>
<evidence type="ECO:0000305" key="12"/>
<evidence type="ECO:0007829" key="13">
    <source>
        <dbReference type="PDB" id="5XWU"/>
    </source>
</evidence>